<accession>C8Z3N7</accession>
<sequence length="687" mass="78768">MCASLNEVKKNDTYGVSQKGYNDNFSESEGVLHGSKSMPTSMKNMLQSPTMVNMCDILQNKEAANDEKPVIPTTDTATAGTGTEDISSTQSEETDQNSHLIASEILEGTFKDVSYKEYANFLGNDNNNQVLTEFVKLLSPLPSSLLETLFNLSKSIYFIAEAQNIDRILECLSIEWIACHPNTHWKSGYKSCHIVLFSLLILNSDLHNNFQVDHKKIKFSMVAFINNTLRALREENEYEELKIYSREHLIIEELSEYYKTLNETPLPLCTESRTSINISDNQSSLKRFSTLGSREFSTSNLRSVNSNSTTLYSRDGQVSVREMSAKSNKNFHNNHPMDALYLKESFDDGLITENGSSWFMDDLILISKKSLPRKYSKRDKDQVAAPKMTSKRNKSFFGWLKPSKTTTLIEHTSRRTSLSYLNKDSEWERVKIQVKEGRIFIFKIKPDVKDIIQSSETDSATIDYFKDISSSYFAYSLLEAEAHVVQDNIIIGSGAMKSNVCNKNTKRKSGNFTVSFPENINGPKLVLEFQTRSVEEAHKFMDCINFWAGRISPVPLTQFEAVSNAEYGWSDKILTEHASLNLKNIVVSEWKPLLGLELLYEDAKDVEMVELKERLKELMNFTRQLGIWIDKHNEIKDKLVEIWSFDDNYFEAVMNNWNSRYLYMNNQYKKRLSYLKALQKAMGSVQF</sequence>
<gene>
    <name type="primary">YEL1</name>
    <name type="ORF">EC1118_1B15_0573g</name>
</gene>
<organism>
    <name type="scientific">Saccharomyces cerevisiae (strain Lalvin EC1118 / Prise de mousse)</name>
    <name type="common">Baker's yeast</name>
    <dbReference type="NCBI Taxonomy" id="643680"/>
    <lineage>
        <taxon>Eukaryota</taxon>
        <taxon>Fungi</taxon>
        <taxon>Dikarya</taxon>
        <taxon>Ascomycota</taxon>
        <taxon>Saccharomycotina</taxon>
        <taxon>Saccharomycetes</taxon>
        <taxon>Saccharomycetales</taxon>
        <taxon>Saccharomycetaceae</taxon>
        <taxon>Saccharomyces</taxon>
    </lineage>
</organism>
<reference key="1">
    <citation type="journal article" date="2009" name="Proc. Natl. Acad. Sci. U.S.A.">
        <title>Eukaryote-to-eukaryote gene transfer events revealed by the genome sequence of the wine yeast Saccharomyces cerevisiae EC1118.</title>
        <authorList>
            <person name="Novo M."/>
            <person name="Bigey F."/>
            <person name="Beyne E."/>
            <person name="Galeote V."/>
            <person name="Gavory F."/>
            <person name="Mallet S."/>
            <person name="Cambon B."/>
            <person name="Legras J.-L."/>
            <person name="Wincker P."/>
            <person name="Casaregola S."/>
            <person name="Dequin S."/>
        </authorList>
    </citation>
    <scope>NUCLEOTIDE SEQUENCE [LARGE SCALE GENOMIC DNA]</scope>
    <source>
        <strain>Lalvin EC1118 / Prise de mousse</strain>
    </source>
</reference>
<keyword id="KW-1003">Cell membrane</keyword>
<keyword id="KW-0963">Cytoplasm</keyword>
<keyword id="KW-0344">Guanine-nucleotide releasing factor</keyword>
<keyword id="KW-0472">Membrane</keyword>
<keyword id="KW-0597">Phosphoprotein</keyword>
<feature type="chain" id="PRO_0000404229" description="Guanine-nucleotide exchange factor YEL1">
    <location>
        <begin position="1"/>
        <end position="687"/>
    </location>
</feature>
<feature type="domain" description="SEC7" evidence="3">
    <location>
        <begin position="57"/>
        <end position="264"/>
    </location>
</feature>
<feature type="domain" description="PH">
    <location>
        <begin position="412"/>
        <end position="551"/>
    </location>
</feature>
<feature type="region of interest" description="Disordered" evidence="4">
    <location>
        <begin position="14"/>
        <end position="35"/>
    </location>
</feature>
<feature type="region of interest" description="Disordered" evidence="4">
    <location>
        <begin position="63"/>
        <end position="97"/>
    </location>
</feature>
<feature type="compositionally biased region" description="Polar residues" evidence="4">
    <location>
        <begin position="14"/>
        <end position="27"/>
    </location>
</feature>
<feature type="compositionally biased region" description="Low complexity" evidence="4">
    <location>
        <begin position="73"/>
        <end position="83"/>
    </location>
</feature>
<feature type="modified residue" description="Phosphothreonine" evidence="2">
    <location>
        <position position="290"/>
    </location>
</feature>
<feature type="modified residue" description="Phosphoserine" evidence="2">
    <location>
        <position position="293"/>
    </location>
</feature>
<feature type="modified residue" description="Phosphoserine" evidence="2">
    <location>
        <position position="299"/>
    </location>
</feature>
<protein>
    <recommendedName>
        <fullName>Guanine-nucleotide exchange factor YEL1</fullName>
    </recommendedName>
    <alternativeName>
        <fullName>EFA6-like protein 1</fullName>
    </alternativeName>
</protein>
<evidence type="ECO:0000250" key="1"/>
<evidence type="ECO:0000250" key="2">
    <source>
        <dbReference type="UniProtKB" id="P34225"/>
    </source>
</evidence>
<evidence type="ECO:0000255" key="3">
    <source>
        <dbReference type="PROSITE-ProRule" id="PRU00189"/>
    </source>
</evidence>
<evidence type="ECO:0000256" key="4">
    <source>
        <dbReference type="SAM" id="MobiDB-lite"/>
    </source>
</evidence>
<evidence type="ECO:0000305" key="5"/>
<name>YEL1_YEAS8</name>
<dbReference type="EMBL" id="FN393060">
    <property type="protein sequence ID" value="CAY77725.1"/>
    <property type="molecule type" value="Genomic_DNA"/>
</dbReference>
<dbReference type="SMR" id="C8Z3N7"/>
<dbReference type="HOGENOM" id="CLU_017717_0_0_1"/>
<dbReference type="OrthoDB" id="24143at4893"/>
<dbReference type="Proteomes" id="UP000000286">
    <property type="component" value="Chromosome II, Scaffold EC1118_1B15"/>
</dbReference>
<dbReference type="GO" id="GO:0005935">
    <property type="term" value="C:cellular bud neck"/>
    <property type="evidence" value="ECO:0007669"/>
    <property type="project" value="UniProtKB-SubCell"/>
</dbReference>
<dbReference type="GO" id="GO:0005934">
    <property type="term" value="C:cellular bud tip"/>
    <property type="evidence" value="ECO:0007669"/>
    <property type="project" value="UniProtKB-SubCell"/>
</dbReference>
<dbReference type="GO" id="GO:0005737">
    <property type="term" value="C:cytoplasm"/>
    <property type="evidence" value="ECO:0007669"/>
    <property type="project" value="UniProtKB-SubCell"/>
</dbReference>
<dbReference type="GO" id="GO:0005886">
    <property type="term" value="C:plasma membrane"/>
    <property type="evidence" value="ECO:0007669"/>
    <property type="project" value="UniProtKB-SubCell"/>
</dbReference>
<dbReference type="GO" id="GO:0005085">
    <property type="term" value="F:guanyl-nucleotide exchange factor activity"/>
    <property type="evidence" value="ECO:0007669"/>
    <property type="project" value="UniProtKB-KW"/>
</dbReference>
<dbReference type="GO" id="GO:0032012">
    <property type="term" value="P:regulation of ARF protein signal transduction"/>
    <property type="evidence" value="ECO:0007669"/>
    <property type="project" value="InterPro"/>
</dbReference>
<dbReference type="CDD" id="cd00171">
    <property type="entry name" value="Sec7"/>
    <property type="match status" value="1"/>
</dbReference>
<dbReference type="Gene3D" id="1.10.1000.11">
    <property type="entry name" value="Arf Nucleotide-binding Site Opener,domain 2"/>
    <property type="match status" value="1"/>
</dbReference>
<dbReference type="InterPro" id="IPR056468">
    <property type="entry name" value="PH_GEF_YEL1"/>
</dbReference>
<dbReference type="InterPro" id="IPR023394">
    <property type="entry name" value="Sec7_C_sf"/>
</dbReference>
<dbReference type="InterPro" id="IPR000904">
    <property type="entry name" value="Sec7_dom"/>
</dbReference>
<dbReference type="InterPro" id="IPR035999">
    <property type="entry name" value="Sec7_dom_sf"/>
</dbReference>
<dbReference type="Pfam" id="PF23633">
    <property type="entry name" value="PH_GEF_YEL1"/>
    <property type="match status" value="1"/>
</dbReference>
<dbReference type="Pfam" id="PF01369">
    <property type="entry name" value="Sec7"/>
    <property type="match status" value="1"/>
</dbReference>
<dbReference type="SMART" id="SM00222">
    <property type="entry name" value="Sec7"/>
    <property type="match status" value="1"/>
</dbReference>
<dbReference type="SUPFAM" id="SSF48425">
    <property type="entry name" value="Sec7 domain"/>
    <property type="match status" value="1"/>
</dbReference>
<dbReference type="PROSITE" id="PS50190">
    <property type="entry name" value="SEC7"/>
    <property type="match status" value="1"/>
</dbReference>
<proteinExistence type="inferred from homology"/>
<comment type="function">
    <text evidence="1">Guanine nucleotide exchange factor for ARF3 required for localization of ARF3 to the bud neck and tip and involved in actin patch polarization.</text>
</comment>
<comment type="subcellular location">
    <subcellularLocation>
        <location evidence="1">Cytoplasm</location>
    </subcellularLocation>
    <subcellularLocation>
        <location evidence="1">Cell membrane</location>
        <topology evidence="1">Peripheral membrane protein</topology>
    </subcellularLocation>
    <subcellularLocation>
        <location evidence="1">Bud neck</location>
    </subcellularLocation>
    <subcellularLocation>
        <location evidence="1">Bud tip</location>
    </subcellularLocation>
    <text evidence="1">Localizes at the cell membrane only at the bud neck and bud tip and this localization is ARF3-dependent.</text>
</comment>
<comment type="similarity">
    <text evidence="5">Belongs to the YEL1 family.</text>
</comment>